<proteinExistence type="evidence at transcript level"/>
<name>FOXA2_DANRE</name>
<gene>
    <name type="primary">foxa2</name>
    <name type="synonym">axial</name>
</gene>
<reference key="1">
    <citation type="journal article" date="1993" name="Genes Dev.">
        <title>Axial, a zebrafish gene expressed along the developing body axis, shows altered expression in cyclops mutant embryos.</title>
        <authorList>
            <person name="Straehle U."/>
            <person name="Blader P."/>
            <person name="Henrique D."/>
            <person name="Ingham P.W."/>
        </authorList>
    </citation>
    <scope>NUCLEOTIDE SEQUENCE [MRNA]</scope>
    <source>
        <tissue>Embryo</tissue>
    </source>
</reference>
<dbReference type="EMBL" id="Z22762">
    <property type="protein sequence ID" value="CAA80443.1"/>
    <property type="molecule type" value="mRNA"/>
</dbReference>
<dbReference type="PIR" id="A47527">
    <property type="entry name" value="A47527"/>
</dbReference>
<dbReference type="RefSeq" id="NP_571024.1">
    <property type="nucleotide sequence ID" value="NM_130949.2"/>
</dbReference>
<dbReference type="SMR" id="Q07342"/>
<dbReference type="FunCoup" id="Q07342">
    <property type="interactions" value="891"/>
</dbReference>
<dbReference type="STRING" id="7955.ENSDARP00000007827"/>
<dbReference type="PaxDb" id="7955-ENSDARP00000007827"/>
<dbReference type="GeneID" id="30126"/>
<dbReference type="KEGG" id="dre:30126"/>
<dbReference type="AGR" id="ZFIN:ZDB-GENE-980526-404"/>
<dbReference type="CTD" id="3170"/>
<dbReference type="ZFIN" id="ZDB-GENE-980526-404">
    <property type="gene designation" value="foxa2"/>
</dbReference>
<dbReference type="eggNOG" id="KOG3563">
    <property type="taxonomic scope" value="Eukaryota"/>
</dbReference>
<dbReference type="InParanoid" id="Q07342"/>
<dbReference type="OrthoDB" id="5954824at2759"/>
<dbReference type="PRO" id="PR:Q07342"/>
<dbReference type="Proteomes" id="UP000000437">
    <property type="component" value="Chromosome 17"/>
</dbReference>
<dbReference type="GO" id="GO:0005634">
    <property type="term" value="C:nucleus"/>
    <property type="evidence" value="ECO:0007669"/>
    <property type="project" value="UniProtKB-SubCell"/>
</dbReference>
<dbReference type="GO" id="GO:0000981">
    <property type="term" value="F:DNA-binding transcription factor activity, RNA polymerase II-specific"/>
    <property type="evidence" value="ECO:0000318"/>
    <property type="project" value="GO_Central"/>
</dbReference>
<dbReference type="GO" id="GO:0019904">
    <property type="term" value="F:protein domain specific binding"/>
    <property type="evidence" value="ECO:0007669"/>
    <property type="project" value="InterPro"/>
</dbReference>
<dbReference type="GO" id="GO:0000978">
    <property type="term" value="F:RNA polymerase II cis-regulatory region sequence-specific DNA binding"/>
    <property type="evidence" value="ECO:0000318"/>
    <property type="project" value="GO_Central"/>
</dbReference>
<dbReference type="GO" id="GO:0043565">
    <property type="term" value="F:sequence-specific DNA binding"/>
    <property type="evidence" value="ECO:0000314"/>
    <property type="project" value="ZFIN"/>
</dbReference>
<dbReference type="GO" id="GO:0000976">
    <property type="term" value="F:transcription cis-regulatory region binding"/>
    <property type="evidence" value="ECO:0000314"/>
    <property type="project" value="ZFIN"/>
</dbReference>
<dbReference type="GO" id="GO:0009653">
    <property type="term" value="P:anatomical structure morphogenesis"/>
    <property type="evidence" value="ECO:0000318"/>
    <property type="project" value="GO_Central"/>
</dbReference>
<dbReference type="GO" id="GO:0048319">
    <property type="term" value="P:axial mesoderm morphogenesis"/>
    <property type="evidence" value="ECO:0000316"/>
    <property type="project" value="ZFIN"/>
</dbReference>
<dbReference type="GO" id="GO:0030154">
    <property type="term" value="P:cell differentiation"/>
    <property type="evidence" value="ECO:0000318"/>
    <property type="project" value="GO_Central"/>
</dbReference>
<dbReference type="GO" id="GO:0032289">
    <property type="term" value="P:central nervous system myelin formation"/>
    <property type="evidence" value="ECO:0000315"/>
    <property type="project" value="ZFIN"/>
</dbReference>
<dbReference type="GO" id="GO:0007492">
    <property type="term" value="P:endoderm development"/>
    <property type="evidence" value="ECO:0000315"/>
    <property type="project" value="ZFIN"/>
</dbReference>
<dbReference type="GO" id="GO:0033504">
    <property type="term" value="P:floor plate development"/>
    <property type="evidence" value="ECO:0000315"/>
    <property type="project" value="ZFIN"/>
</dbReference>
<dbReference type="GO" id="GO:0021779">
    <property type="term" value="P:oligodendrocyte cell fate commitment"/>
    <property type="evidence" value="ECO:0000315"/>
    <property type="project" value="ZFIN"/>
</dbReference>
<dbReference type="GO" id="GO:0006357">
    <property type="term" value="P:regulation of transcription by RNA polymerase II"/>
    <property type="evidence" value="ECO:0000318"/>
    <property type="project" value="GO_Central"/>
</dbReference>
<dbReference type="GO" id="GO:0007418">
    <property type="term" value="P:ventral midline development"/>
    <property type="evidence" value="ECO:0000315"/>
    <property type="project" value="ZFIN"/>
</dbReference>
<dbReference type="CDD" id="cd20039">
    <property type="entry name" value="FH_FOXA2"/>
    <property type="match status" value="1"/>
</dbReference>
<dbReference type="FunFam" id="1.10.10.10:FF:000042">
    <property type="entry name" value="hepatocyte nuclear factor 3-beta"/>
    <property type="match status" value="1"/>
</dbReference>
<dbReference type="Gene3D" id="1.10.10.10">
    <property type="entry name" value="Winged helix-like DNA-binding domain superfamily/Winged helix DNA-binding domain"/>
    <property type="match status" value="1"/>
</dbReference>
<dbReference type="InterPro" id="IPR013638">
    <property type="entry name" value="Fork-head_N"/>
</dbReference>
<dbReference type="InterPro" id="IPR001766">
    <property type="entry name" value="Fork_head_dom"/>
</dbReference>
<dbReference type="InterPro" id="IPR018533">
    <property type="entry name" value="Forkhead_box_C"/>
</dbReference>
<dbReference type="InterPro" id="IPR050211">
    <property type="entry name" value="FOX_domain-containing"/>
</dbReference>
<dbReference type="InterPro" id="IPR018122">
    <property type="entry name" value="TF_fork_head_CS_1"/>
</dbReference>
<dbReference type="InterPro" id="IPR030456">
    <property type="entry name" value="TF_fork_head_CS_2"/>
</dbReference>
<dbReference type="InterPro" id="IPR036388">
    <property type="entry name" value="WH-like_DNA-bd_sf"/>
</dbReference>
<dbReference type="InterPro" id="IPR036390">
    <property type="entry name" value="WH_DNA-bd_sf"/>
</dbReference>
<dbReference type="PANTHER" id="PTHR11829">
    <property type="entry name" value="FORKHEAD BOX PROTEIN"/>
    <property type="match status" value="1"/>
</dbReference>
<dbReference type="PANTHER" id="PTHR11829:SF167">
    <property type="entry name" value="HEPATOCYTE NUCLEAR FACTOR 3-BETA"/>
    <property type="match status" value="1"/>
</dbReference>
<dbReference type="Pfam" id="PF00250">
    <property type="entry name" value="Forkhead"/>
    <property type="match status" value="1"/>
</dbReference>
<dbReference type="Pfam" id="PF08430">
    <property type="entry name" value="Forkhead_N"/>
    <property type="match status" value="1"/>
</dbReference>
<dbReference type="Pfam" id="PF09354">
    <property type="entry name" value="HNF_C"/>
    <property type="match status" value="1"/>
</dbReference>
<dbReference type="PRINTS" id="PR00053">
    <property type="entry name" value="FORKHEAD"/>
</dbReference>
<dbReference type="SMART" id="SM00339">
    <property type="entry name" value="FH"/>
    <property type="match status" value="1"/>
</dbReference>
<dbReference type="SUPFAM" id="SSF46785">
    <property type="entry name" value="Winged helix' DNA-binding domain"/>
    <property type="match status" value="1"/>
</dbReference>
<dbReference type="PROSITE" id="PS00657">
    <property type="entry name" value="FORK_HEAD_1"/>
    <property type="match status" value="1"/>
</dbReference>
<dbReference type="PROSITE" id="PS00658">
    <property type="entry name" value="FORK_HEAD_2"/>
    <property type="match status" value="1"/>
</dbReference>
<dbReference type="PROSITE" id="PS50039">
    <property type="entry name" value="FORK_HEAD_3"/>
    <property type="match status" value="1"/>
</dbReference>
<accession>Q07342</accession>
<evidence type="ECO:0000255" key="1">
    <source>
        <dbReference type="PROSITE-ProRule" id="PRU00089"/>
    </source>
</evidence>
<evidence type="ECO:0000256" key="2">
    <source>
        <dbReference type="SAM" id="MobiDB-lite"/>
    </source>
</evidence>
<feature type="chain" id="PRO_0000091895" description="Forkhead box protein A2">
    <location>
        <begin position="1"/>
        <end position="409"/>
    </location>
</feature>
<feature type="DNA-binding region" description="Fork-head" evidence="1">
    <location>
        <begin position="150"/>
        <end position="241"/>
    </location>
</feature>
<feature type="region of interest" description="Disordered" evidence="2">
    <location>
        <begin position="250"/>
        <end position="315"/>
    </location>
</feature>
<feature type="compositionally biased region" description="Basic and acidic residues" evidence="2">
    <location>
        <begin position="250"/>
        <end position="262"/>
    </location>
</feature>
<feature type="compositionally biased region" description="Low complexity" evidence="2">
    <location>
        <begin position="263"/>
        <end position="286"/>
    </location>
</feature>
<organism>
    <name type="scientific">Danio rerio</name>
    <name type="common">Zebrafish</name>
    <name type="synonym">Brachydanio rerio</name>
    <dbReference type="NCBI Taxonomy" id="7955"/>
    <lineage>
        <taxon>Eukaryota</taxon>
        <taxon>Metazoa</taxon>
        <taxon>Chordata</taxon>
        <taxon>Craniata</taxon>
        <taxon>Vertebrata</taxon>
        <taxon>Euteleostomi</taxon>
        <taxon>Actinopterygii</taxon>
        <taxon>Neopterygii</taxon>
        <taxon>Teleostei</taxon>
        <taxon>Ostariophysi</taxon>
        <taxon>Cypriniformes</taxon>
        <taxon>Danionidae</taxon>
        <taxon>Danioninae</taxon>
        <taxon>Danio</taxon>
    </lineage>
</organism>
<comment type="function">
    <text>May play a crucial role in specification of both the axial mesendoderm and the ventral nervous system.</text>
</comment>
<comment type="subcellular location">
    <subcellularLocation>
        <location>Nucleus</location>
    </subcellularLocation>
</comment>
<comment type="developmental stage">
    <text>Expressed just before gastrulation in a narrow region on the dorsal side of the embryo. Expression can be detected in the involuted cells comprising the mesendoderm of the developing axis. At the end of gastrulation expression is turned on in the ventral neural plate in cells adjacent to the axial-expressing mesodermal cells.</text>
</comment>
<comment type="induction">
    <text>By mesoderm-inducing factor activin A.</text>
</comment>
<protein>
    <recommendedName>
        <fullName>Forkhead box protein A2</fullName>
    </recommendedName>
    <alternativeName>
        <fullName>Axial protein</fullName>
    </alternativeName>
</protein>
<keyword id="KW-0217">Developmental protein</keyword>
<keyword id="KW-0238">DNA-binding</keyword>
<keyword id="KW-0539">Nucleus</keyword>
<keyword id="KW-1185">Reference proteome</keyword>
<sequence length="409" mass="45076">MLGAVKMEGHEHAADWSTYYGEPECYTSVSNMNTGLGMNSMNTYMTMSGMSSTANMTAANTMNMSYVNTGMSPSMTGMSPGTGAMAGMGAGMTGMSAALSPTMSPMAAQAPSMNALTSYSNMNAMSPMYGQSNINRSRDPKTYRRSYTHAKPPYSYISLITMAIQQSPSKMLTLSEIYQWIMDLFPFYRQNQQRWQNSIRHSLSFNDCFLKVPRSPDKPGKGSFWTLHPDSGNMFENGCYLRRQKRFKCDKKLSKDPSRKTSEGGSNSSSESCNGNESPHSNSSSNELKRSLSDMKSGQGLSPDHAASPTSQAQHLLAQHHSVLAHEGHLKPEHHYSFNHPFSINNLMSSEQQHHKMDLKTYEQVMHYGYGSPMAGTLSMGSMASKAGLDSPDTSYYQGVYSRPILNSS</sequence>